<name>NPIIB_ARTGP</name>
<accession>E5R1Z3</accession>
<reference key="1">
    <citation type="journal article" date="2012" name="MBio">
        <title>Comparative genome analysis of Trichophyton rubrum and related dermatophytes reveals candidate genes involved in infection.</title>
        <authorList>
            <person name="Martinez D.A."/>
            <person name="Oliver B.G."/>
            <person name="Graeser Y."/>
            <person name="Goldberg J.M."/>
            <person name="Li W."/>
            <person name="Martinez-Rossi N.M."/>
            <person name="Monod M."/>
            <person name="Shelest E."/>
            <person name="Barton R.C."/>
            <person name="Birch E."/>
            <person name="Brakhage A.A."/>
            <person name="Chen Z."/>
            <person name="Gurr S.J."/>
            <person name="Heiman D."/>
            <person name="Heitman J."/>
            <person name="Kosti I."/>
            <person name="Rossi A."/>
            <person name="Saif S."/>
            <person name="Samalova M."/>
            <person name="Saunders C.W."/>
            <person name="Shea T."/>
            <person name="Summerbell R.C."/>
            <person name="Xu J."/>
            <person name="Young S."/>
            <person name="Zeng Q."/>
            <person name="Birren B.W."/>
            <person name="Cuomo C.A."/>
            <person name="White T.C."/>
        </authorList>
    </citation>
    <scope>NUCLEOTIDE SEQUENCE [LARGE SCALE GENOMIC DNA]</scope>
    <source>
        <strain>ATCC MYA-4604 / CBS 118893</strain>
    </source>
</reference>
<gene>
    <name type="ORF">MGYG_00813</name>
</gene>
<comment type="function">
    <text evidence="1">Secreted metalloproteinase that allows assimilation of proteinaceous substrates. Shows high activities on basic nuclear substrates such as histone and protamine. May be involved in virulence (By similarity).</text>
</comment>
<comment type="catalytic activity">
    <reaction>
        <text>Preferential cleavage of bonds with hydrophobic residues in P1'. Also 3-Asn-|-Gln-4 and 8-Gly-|-Ser-9 bonds in insulin B chain.</text>
        <dbReference type="EC" id="3.4.24.39"/>
    </reaction>
</comment>
<comment type="cofactor">
    <cofactor evidence="1">
        <name>Zn(2+)</name>
        <dbReference type="ChEBI" id="CHEBI:29105"/>
    </cofactor>
    <text evidence="1">Binds 1 zinc ion per subunit.</text>
</comment>
<comment type="subcellular location">
    <subcellularLocation>
        <location evidence="1">Secreted</location>
    </subcellularLocation>
</comment>
<comment type="similarity">
    <text evidence="4">Belongs to the peptidase M35 family.</text>
</comment>
<protein>
    <recommendedName>
        <fullName>Neutral protease 2 homolog MGYG_00813</fullName>
        <ecNumber>3.4.24.39</ecNumber>
    </recommendedName>
    <alternativeName>
        <fullName>Deuterolysin MGYG_00813</fullName>
    </alternativeName>
</protein>
<organism>
    <name type="scientific">Arthroderma gypseum (strain ATCC MYA-4604 / CBS 118893)</name>
    <name type="common">Microsporum gypseum</name>
    <dbReference type="NCBI Taxonomy" id="535722"/>
    <lineage>
        <taxon>Eukaryota</taxon>
        <taxon>Fungi</taxon>
        <taxon>Dikarya</taxon>
        <taxon>Ascomycota</taxon>
        <taxon>Pezizomycotina</taxon>
        <taxon>Eurotiomycetes</taxon>
        <taxon>Eurotiomycetidae</taxon>
        <taxon>Onygenales</taxon>
        <taxon>Arthrodermataceae</taxon>
        <taxon>Nannizzia</taxon>
    </lineage>
</organism>
<dbReference type="EC" id="3.4.24.39"/>
<dbReference type="EMBL" id="DS989822">
    <property type="protein sequence ID" value="EFQ97772.1"/>
    <property type="molecule type" value="Genomic_DNA"/>
</dbReference>
<dbReference type="RefSeq" id="XP_003176724.1">
    <property type="nucleotide sequence ID" value="XM_003176676.1"/>
</dbReference>
<dbReference type="SMR" id="E5R1Z3"/>
<dbReference type="STRING" id="535722.E5R1Z3"/>
<dbReference type="MEROPS" id="M35.001"/>
<dbReference type="GeneID" id="10032046"/>
<dbReference type="VEuPathDB" id="FungiDB:MGYG_00813"/>
<dbReference type="eggNOG" id="ENOG502SGF5">
    <property type="taxonomic scope" value="Eukaryota"/>
</dbReference>
<dbReference type="HOGENOM" id="CLU_039313_1_0_1"/>
<dbReference type="InParanoid" id="E5R1Z3"/>
<dbReference type="OMA" id="QTMWDGN"/>
<dbReference type="OrthoDB" id="412874at2759"/>
<dbReference type="Proteomes" id="UP000002669">
    <property type="component" value="Unassembled WGS sequence"/>
</dbReference>
<dbReference type="GO" id="GO:0005576">
    <property type="term" value="C:extracellular region"/>
    <property type="evidence" value="ECO:0007669"/>
    <property type="project" value="UniProtKB-SubCell"/>
</dbReference>
<dbReference type="GO" id="GO:0046872">
    <property type="term" value="F:metal ion binding"/>
    <property type="evidence" value="ECO:0007669"/>
    <property type="project" value="UniProtKB-KW"/>
</dbReference>
<dbReference type="GO" id="GO:0004222">
    <property type="term" value="F:metalloendopeptidase activity"/>
    <property type="evidence" value="ECO:0007669"/>
    <property type="project" value="InterPro"/>
</dbReference>
<dbReference type="GO" id="GO:0006508">
    <property type="term" value="P:proteolysis"/>
    <property type="evidence" value="ECO:0007669"/>
    <property type="project" value="UniProtKB-KW"/>
</dbReference>
<dbReference type="CDD" id="cd11008">
    <property type="entry name" value="M35_deuterolysin_like"/>
    <property type="match status" value="1"/>
</dbReference>
<dbReference type="Gene3D" id="2.60.40.2970">
    <property type="match status" value="1"/>
</dbReference>
<dbReference type="Gene3D" id="3.40.390.10">
    <property type="entry name" value="Collagenase (Catalytic Domain)"/>
    <property type="match status" value="1"/>
</dbReference>
<dbReference type="InterPro" id="IPR050414">
    <property type="entry name" value="Fungal_M35_metalloproteases"/>
</dbReference>
<dbReference type="InterPro" id="IPR024079">
    <property type="entry name" value="MetalloPept_cat_dom_sf"/>
</dbReference>
<dbReference type="InterPro" id="IPR001384">
    <property type="entry name" value="Peptidase_M35"/>
</dbReference>
<dbReference type="PANTHER" id="PTHR37016">
    <property type="match status" value="1"/>
</dbReference>
<dbReference type="PANTHER" id="PTHR37016:SF3">
    <property type="entry name" value="NEUTRAL PROTEASE 2-RELATED"/>
    <property type="match status" value="1"/>
</dbReference>
<dbReference type="Pfam" id="PF02102">
    <property type="entry name" value="Peptidase_M35"/>
    <property type="match status" value="1"/>
</dbReference>
<dbReference type="PRINTS" id="PR00768">
    <property type="entry name" value="DEUTEROLYSIN"/>
</dbReference>
<dbReference type="SUPFAM" id="SSF55486">
    <property type="entry name" value="Metalloproteases ('zincins'), catalytic domain"/>
    <property type="match status" value="1"/>
</dbReference>
<dbReference type="PROSITE" id="PS00142">
    <property type="entry name" value="ZINC_PROTEASE"/>
    <property type="match status" value="1"/>
</dbReference>
<keyword id="KW-0165">Cleavage on pair of basic residues</keyword>
<keyword id="KW-1015">Disulfide bond</keyword>
<keyword id="KW-0378">Hydrolase</keyword>
<keyword id="KW-0479">Metal-binding</keyword>
<keyword id="KW-0482">Metalloprotease</keyword>
<keyword id="KW-0645">Protease</keyword>
<keyword id="KW-1185">Reference proteome</keyword>
<keyword id="KW-0964">Secreted</keyword>
<keyword id="KW-0732">Signal</keyword>
<keyword id="KW-0843">Virulence</keyword>
<keyword id="KW-0862">Zinc</keyword>
<keyword id="KW-0865">Zymogen</keyword>
<feature type="signal peptide" evidence="2">
    <location>
        <begin position="1"/>
        <end position="19"/>
    </location>
</feature>
<feature type="propeptide" id="PRO_0000407120" evidence="1">
    <location>
        <begin position="20"/>
        <end position="190"/>
    </location>
</feature>
<feature type="chain" id="PRO_0000407121" description="Neutral protease 2 homolog MGYG_00813">
    <location>
        <begin position="191"/>
        <end position="375"/>
    </location>
</feature>
<feature type="active site" evidence="3">
    <location>
        <position position="319"/>
    </location>
</feature>
<feature type="binding site" evidence="3">
    <location>
        <position position="318"/>
    </location>
    <ligand>
        <name>Zn(2+)</name>
        <dbReference type="ChEBI" id="CHEBI:29105"/>
        <note>catalytic</note>
    </ligand>
</feature>
<feature type="binding site" evidence="3">
    <location>
        <position position="322"/>
    </location>
    <ligand>
        <name>Zn(2+)</name>
        <dbReference type="ChEBI" id="CHEBI:29105"/>
        <note>catalytic</note>
    </ligand>
</feature>
<feature type="binding site" evidence="3">
    <location>
        <position position="333"/>
    </location>
    <ligand>
        <name>Zn(2+)</name>
        <dbReference type="ChEBI" id="CHEBI:29105"/>
        <note>catalytic</note>
    </ligand>
</feature>
<feature type="disulfide bond" evidence="1">
    <location>
        <begin position="198"/>
        <end position="268"/>
    </location>
</feature>
<feature type="disulfide bond" evidence="1">
    <location>
        <begin position="275"/>
        <end position="293"/>
    </location>
</feature>
<proteinExistence type="inferred from homology"/>
<sequence length="375" mass="40677">MQVIVALAALSSLAAPALGFSIPRGVPVSQSMIDVKLSAAGNSMVKATITNNGDRALNLLKFHTIMDSNPTRKVTIESQDGKEVQFTGMMPRYKHTDLKPTYFISLPPKGTVEHSFDIASTHDLSRGGKFTLKAEGMVPLAEENGTTITGAAKYNSNELHMDIDGNKAASVERAMGIVKRSGPLTRIGKRTSIDMQSCSNRQELQALTAALRASAQLSSMAAQAVQQNQEKYMEYFKDPQYAQTVQSRFQSVAQESSSTSGGGTTYHCTDLMNGCEQGVLAYTLPSQNEVFNCPIYYSDLPPLSNECHAQDQATTTLHELTHNPAVQEPFCEDNGYGYERATALSAEKAVQNADSYALFANGKFLPMSSMLVTQD</sequence>
<evidence type="ECO:0000250" key="1"/>
<evidence type="ECO:0000255" key="2"/>
<evidence type="ECO:0000255" key="3">
    <source>
        <dbReference type="PROSITE-ProRule" id="PRU10095"/>
    </source>
</evidence>
<evidence type="ECO:0000305" key="4"/>